<name>PA2GA_RAT</name>
<evidence type="ECO:0000250" key="1"/>
<evidence type="ECO:0000250" key="2">
    <source>
        <dbReference type="UniProtKB" id="P14555"/>
    </source>
</evidence>
<evidence type="ECO:0000250" key="3">
    <source>
        <dbReference type="UniProtKB" id="P31482"/>
    </source>
</evidence>
<evidence type="ECO:0000255" key="4">
    <source>
        <dbReference type="PROSITE-ProRule" id="PRU10035"/>
    </source>
</evidence>
<evidence type="ECO:0000255" key="5">
    <source>
        <dbReference type="PROSITE-ProRule" id="PRU10036"/>
    </source>
</evidence>
<evidence type="ECO:0000269" key="6">
    <source>
    </source>
</evidence>
<evidence type="ECO:0000269" key="7">
    <source>
    </source>
</evidence>
<evidence type="ECO:0000269" key="8">
    <source>
    </source>
</evidence>
<evidence type="ECO:0000269" key="9">
    <source>
    </source>
</evidence>
<evidence type="ECO:0000305" key="10"/>
<evidence type="ECO:0000305" key="11">
    <source>
    </source>
</evidence>
<keyword id="KW-0929">Antimicrobial</keyword>
<keyword id="KW-0081">Bacteriolytic enzyme</keyword>
<keyword id="KW-0106">Calcium</keyword>
<keyword id="KW-1003">Cell membrane</keyword>
<keyword id="KW-0903">Direct protein sequencing</keyword>
<keyword id="KW-1015">Disulfide bond</keyword>
<keyword id="KW-0378">Hydrolase</keyword>
<keyword id="KW-0395">Inflammatory response</keyword>
<keyword id="KW-0442">Lipid degradation</keyword>
<keyword id="KW-0443">Lipid metabolism</keyword>
<keyword id="KW-0472">Membrane</keyword>
<keyword id="KW-0479">Metal-binding</keyword>
<keyword id="KW-0496">Mitochondrion</keyword>
<keyword id="KW-1000">Mitochondrion outer membrane</keyword>
<keyword id="KW-1208">Phospholipid metabolism</keyword>
<keyword id="KW-1185">Reference proteome</keyword>
<keyword id="KW-0964">Secreted</keyword>
<keyword id="KW-0732">Signal</keyword>
<protein>
    <recommendedName>
        <fullName>Phospholipase A2, membrane associated</fullName>
        <ecNumber evidence="8">3.1.1.4</ecNumber>
    </recommendedName>
    <alternativeName>
        <fullName>GIIC sPLA2</fullName>
    </alternativeName>
    <alternativeName>
        <fullName>Group IIA phospholipase A2</fullName>
    </alternativeName>
    <alternativeName>
        <fullName>Phosphatidylcholine 2-acylhydrolase 2A</fullName>
    </alternativeName>
</protein>
<comment type="function">
    <text evidence="2 3 8">Secretory calcium-dependent phospholipase A2 that primarily targets extracellular phospholipids with implications in host antimicrobial defense, inflammatory response and tissue regeneration (By similarity). Hydrolyzes the ester bond of the fatty acyl group attached at sn-2 position of phospholipids (phospholipase A2 activity) with preference for phosphatidylethanolamines and phosphatidylglycerols over phosphatidylcholines (PubMed:3356705). Contributes to lipid remodeling of cellular membranes and generation of lipid mediators involved in pathogen clearance. Displays bactericidal activity against Gram-positive bacteria by directly hydrolyzing phospholipids of the bacterial membrane. Upon sterile inflammation, targets membrane phospholipids of extracellular mitochondria released from activated platelets, generating free unsaturated fatty acids such as arachidonate that is used by neighboring leukocytes to synthesize inflammatory eicosanoids such as leukotrienes. Simultaneously, by compromising mitochondrial membrane integrity, promotes the release in circulation of potent damage-associated molecular pattern molecules that activate the innate immune response (By similarity). Plays a stem cell regulator role in the intestinal crypt. Within intracellular compartment mediates Paneth cell differentiation and its stem cell supporting functions by inhibiting Wnt signaling pathway in intestinal stem cell (ICS). Secreted in the intestinal lumen upon inflammation, acts in an autocrine way and promotes prostaglandin E2 synthesis that stimulates Wnt signaling pathway in ICS cells and tissue regeneration (By similarity). May play a role in the biosynthesis of N-acyl ethanolamines that regulate energy metabolism and inflammation. Hydrolyzes N-acyl phosphatidylethanolamines to N-acyl lysophosphatidylethanolamines, which are further cleaved by a lysophospholipase D to release N-acyl ethanolamines. Independent of its catalytic activity, acts as a ligand for integrins. Binds to and activates integrins ITGAV:ITGB3, ITGA4:ITGB1 and ITGA5:ITGB1. Binds to a site (site 2) which is distinct from the classical ligand-binding site (site 1) and induces integrin conformational changes and enhanced ligand binding to site 1. Induces cell proliferation in an integrin-dependent manner (By similarity).</text>
</comment>
<comment type="catalytic activity">
    <reaction evidence="8">
        <text>a 1,2-diacyl-sn-glycero-3-phosphoethanolamine + H2O = a 1-acyl-sn-glycero-3-phosphoethanolamine + a fatty acid + H(+)</text>
        <dbReference type="Rhea" id="RHEA:44604"/>
        <dbReference type="ChEBI" id="CHEBI:15377"/>
        <dbReference type="ChEBI" id="CHEBI:15378"/>
        <dbReference type="ChEBI" id="CHEBI:28868"/>
        <dbReference type="ChEBI" id="CHEBI:64381"/>
        <dbReference type="ChEBI" id="CHEBI:64612"/>
    </reaction>
    <physiologicalReaction direction="left-to-right" evidence="11">
        <dbReference type="Rhea" id="RHEA:44605"/>
    </physiologicalReaction>
</comment>
<comment type="catalytic activity">
    <reaction evidence="8">
        <text>1-hexadecanoyl-2-(9Z-octadecenoyl)-sn-glycero-3-phosphoethanolamine + H2O = 1-hexadecanoyl-sn-glycero-3-phosphoethanolamine + (9Z)-octadecenoate + H(+)</text>
        <dbReference type="Rhea" id="RHEA:40911"/>
        <dbReference type="ChEBI" id="CHEBI:15377"/>
        <dbReference type="ChEBI" id="CHEBI:15378"/>
        <dbReference type="ChEBI" id="CHEBI:30823"/>
        <dbReference type="ChEBI" id="CHEBI:73004"/>
        <dbReference type="ChEBI" id="CHEBI:73007"/>
    </reaction>
    <physiologicalReaction direction="left-to-right" evidence="11">
        <dbReference type="Rhea" id="RHEA:40912"/>
    </physiologicalReaction>
</comment>
<comment type="catalytic activity">
    <reaction evidence="2">
        <text>1-hexadecanoyl-2-(9Z,12Z-octadecadienoyl)-sn-glycero-3-phosphoethanolamine + H2O = 1-hexadecanoyl-sn-glycero-3-phosphoethanolamine + (9Z,12Z)-octadecadienoate + H(+)</text>
        <dbReference type="Rhea" id="RHEA:40815"/>
        <dbReference type="ChEBI" id="CHEBI:15377"/>
        <dbReference type="ChEBI" id="CHEBI:15378"/>
        <dbReference type="ChEBI" id="CHEBI:30245"/>
        <dbReference type="ChEBI" id="CHEBI:73004"/>
        <dbReference type="ChEBI" id="CHEBI:73008"/>
    </reaction>
    <physiologicalReaction direction="left-to-right" evidence="2">
        <dbReference type="Rhea" id="RHEA:40816"/>
    </physiologicalReaction>
</comment>
<comment type="catalytic activity">
    <reaction evidence="2">
        <text>1-hexadecanoyl-2-(5Z,8Z,11Z,14Z-eicosatetraenoyl)-sn-glycero-3-phosphoethanolamine + H2O = 1-hexadecanoyl-sn-glycero-3-phosphoethanolamine + (5Z,8Z,11Z,14Z)-eicosatetraenoate + H(+)</text>
        <dbReference type="Rhea" id="RHEA:40431"/>
        <dbReference type="ChEBI" id="CHEBI:15377"/>
        <dbReference type="ChEBI" id="CHEBI:15378"/>
        <dbReference type="ChEBI" id="CHEBI:32395"/>
        <dbReference type="ChEBI" id="CHEBI:73004"/>
        <dbReference type="ChEBI" id="CHEBI:73009"/>
    </reaction>
    <physiologicalReaction direction="left-to-right" evidence="2">
        <dbReference type="Rhea" id="RHEA:40432"/>
    </physiologicalReaction>
</comment>
<comment type="catalytic activity">
    <reaction evidence="2">
        <text>N-hexadecanoyl-1,2-di-(9Z-octadecenoyl)-sn-glycero-3-phosphoethanolamine + H2O = N-hexadecanoyl-1-(9Z-octadecenoyl)-sn-glycero-3-phosphoethanolamine + (9Z)-octadecenoate + H(+)</text>
        <dbReference type="Rhea" id="RHEA:45424"/>
        <dbReference type="ChEBI" id="CHEBI:15377"/>
        <dbReference type="ChEBI" id="CHEBI:15378"/>
        <dbReference type="ChEBI" id="CHEBI:30823"/>
        <dbReference type="ChEBI" id="CHEBI:78097"/>
        <dbReference type="ChEBI" id="CHEBI:85217"/>
    </reaction>
    <physiologicalReaction direction="left-to-right" evidence="2">
        <dbReference type="Rhea" id="RHEA:45425"/>
    </physiologicalReaction>
</comment>
<comment type="catalytic activity">
    <reaction evidence="2">
        <text>1,2-dihexadecanoyl-sn-glycero-3-phospho-(1'-sn-glycerol) + H2O = 1-hexadecanoyl-sn-glycero-3-phospho-(1'-sn-glycerol) + hexadecanoate + H(+)</text>
        <dbReference type="Rhea" id="RHEA:45472"/>
        <dbReference type="ChEBI" id="CHEBI:7896"/>
        <dbReference type="ChEBI" id="CHEBI:15377"/>
        <dbReference type="ChEBI" id="CHEBI:15378"/>
        <dbReference type="ChEBI" id="CHEBI:72829"/>
        <dbReference type="ChEBI" id="CHEBI:75158"/>
    </reaction>
    <physiologicalReaction direction="left-to-right" evidence="2">
        <dbReference type="Rhea" id="RHEA:45473"/>
    </physiologicalReaction>
</comment>
<comment type="catalytic activity">
    <reaction evidence="8">
        <text>1-hexadecanoyl-2-(9Z-octadecenoyl)-sn-glycero-3-phosphoglycerol + H2O = 1-hexadecanoyl-sn-glycero-3-phosphoglycerol + (9Z)-octadecenoate + H(+)</text>
        <dbReference type="Rhea" id="RHEA:44524"/>
        <dbReference type="ChEBI" id="CHEBI:15377"/>
        <dbReference type="ChEBI" id="CHEBI:15378"/>
        <dbReference type="ChEBI" id="CHEBI:30823"/>
        <dbReference type="ChEBI" id="CHEBI:84472"/>
        <dbReference type="ChEBI" id="CHEBI:84475"/>
    </reaction>
    <physiologicalReaction direction="left-to-right" evidence="2">
        <dbReference type="Rhea" id="RHEA:44525"/>
    </physiologicalReaction>
</comment>
<comment type="catalytic activity">
    <reaction evidence="2">
        <text>1-hexadecanoyl-2-(9Z-octadecenoyl)-sn-glycero-3-phospho-(1'-sn-glycerol) + H2O = 1-hexadecanoyl-sn-glycero-3-phospho-(1'-sn-glycerol) + (9Z)-octadecenoate + H(+)</text>
        <dbReference type="Rhea" id="RHEA:40919"/>
        <dbReference type="ChEBI" id="CHEBI:15377"/>
        <dbReference type="ChEBI" id="CHEBI:15378"/>
        <dbReference type="ChEBI" id="CHEBI:30823"/>
        <dbReference type="ChEBI" id="CHEBI:72841"/>
        <dbReference type="ChEBI" id="CHEBI:75158"/>
    </reaction>
    <physiologicalReaction direction="left-to-right" evidence="2">
        <dbReference type="Rhea" id="RHEA:40920"/>
    </physiologicalReaction>
</comment>
<comment type="catalytic activity">
    <reaction evidence="4 5 8">
        <text>a 1,2-diacyl-sn-glycero-3-phosphocholine + H2O = a 1-acyl-sn-glycero-3-phosphocholine + a fatty acid + H(+)</text>
        <dbReference type="Rhea" id="RHEA:15801"/>
        <dbReference type="ChEBI" id="CHEBI:15377"/>
        <dbReference type="ChEBI" id="CHEBI:15378"/>
        <dbReference type="ChEBI" id="CHEBI:28868"/>
        <dbReference type="ChEBI" id="CHEBI:57643"/>
        <dbReference type="ChEBI" id="CHEBI:58168"/>
        <dbReference type="EC" id="3.1.1.4"/>
    </reaction>
    <physiologicalReaction direction="left-to-right" evidence="11">
        <dbReference type="Rhea" id="RHEA:15802"/>
    </physiologicalReaction>
</comment>
<comment type="catalytic activity">
    <reaction evidence="2">
        <text>1,2-dihexadecanoyl-sn-glycero-3-phosphocholine + H2O = 1-hexadecanoyl-sn-glycero-3-phosphocholine + hexadecanoate + H(+)</text>
        <dbReference type="Rhea" id="RHEA:41223"/>
        <dbReference type="ChEBI" id="CHEBI:7896"/>
        <dbReference type="ChEBI" id="CHEBI:15377"/>
        <dbReference type="ChEBI" id="CHEBI:15378"/>
        <dbReference type="ChEBI" id="CHEBI:72998"/>
        <dbReference type="ChEBI" id="CHEBI:72999"/>
    </reaction>
    <physiologicalReaction direction="left-to-right" evidence="2">
        <dbReference type="Rhea" id="RHEA:41224"/>
    </physiologicalReaction>
</comment>
<comment type="catalytic activity">
    <reaction evidence="8">
        <text>1-hexadecanoyl-2-(9Z-octadecenoyl)-sn-glycero-3-phosphocholine + H2O = 1-hexadecanoyl-sn-glycero-3-phosphocholine + (9Z)-octadecenoate + H(+)</text>
        <dbReference type="Rhea" id="RHEA:38779"/>
        <dbReference type="ChEBI" id="CHEBI:15377"/>
        <dbReference type="ChEBI" id="CHEBI:15378"/>
        <dbReference type="ChEBI" id="CHEBI:30823"/>
        <dbReference type="ChEBI" id="CHEBI:72998"/>
        <dbReference type="ChEBI" id="CHEBI:73001"/>
    </reaction>
    <physiologicalReaction direction="left-to-right" evidence="11">
        <dbReference type="Rhea" id="RHEA:38780"/>
    </physiologicalReaction>
</comment>
<comment type="catalytic activity">
    <reaction evidence="8">
        <text>1-hexadecanoyl-2-(9Z,12Z-octadecadienoyl)-sn-glycero-3-phosphocholine + H2O = (9Z,12Z)-octadecadienoate + 1-hexadecanoyl-sn-glycero-3-phosphocholine + H(+)</text>
        <dbReference type="Rhea" id="RHEA:40811"/>
        <dbReference type="ChEBI" id="CHEBI:15377"/>
        <dbReference type="ChEBI" id="CHEBI:15378"/>
        <dbReference type="ChEBI" id="CHEBI:30245"/>
        <dbReference type="ChEBI" id="CHEBI:72998"/>
        <dbReference type="ChEBI" id="CHEBI:73002"/>
    </reaction>
    <physiologicalReaction direction="left-to-right" evidence="11">
        <dbReference type="Rhea" id="RHEA:40812"/>
    </physiologicalReaction>
</comment>
<comment type="catalytic activity">
    <reaction evidence="2">
        <text>1-hexadecanoyl-2-(4Z,7Z,10Z,13Z,16Z,19Z-docosahexaenoyl)-sn-glycero-3-phosphocholine + H2O = (4Z,7Z,10Z,13Z,16Z,19Z)-docosahexaenoate + 1-hexadecanoyl-sn-glycero-3-phosphocholine + H(+)</text>
        <dbReference type="Rhea" id="RHEA:41231"/>
        <dbReference type="ChEBI" id="CHEBI:15377"/>
        <dbReference type="ChEBI" id="CHEBI:15378"/>
        <dbReference type="ChEBI" id="CHEBI:72998"/>
        <dbReference type="ChEBI" id="CHEBI:74963"/>
        <dbReference type="ChEBI" id="CHEBI:77016"/>
    </reaction>
    <physiologicalReaction direction="left-to-right" evidence="2">
        <dbReference type="Rhea" id="RHEA:41232"/>
    </physiologicalReaction>
</comment>
<comment type="cofactor">
    <cofactor evidence="8">
        <name>Ca(2+)</name>
        <dbReference type="ChEBI" id="CHEBI:29108"/>
    </cofactor>
    <text evidence="2">Binds 1 Ca(2+) ion per subunit.</text>
</comment>
<comment type="biophysicochemical properties">
    <phDependence>
        <text evidence="8">Optimum pH is 8-9.5.</text>
    </phDependence>
</comment>
<comment type="subcellular location">
    <subcellularLocation>
        <location evidence="6">Secreted</location>
    </subcellularLocation>
    <subcellularLocation>
        <location evidence="6">Cell membrane</location>
        <topology evidence="2">Peripheral membrane protein</topology>
    </subcellularLocation>
    <subcellularLocation>
        <location evidence="2">Mitochondrion outer membrane</location>
        <topology evidence="2">Peripheral membrane protein</topology>
    </subcellularLocation>
</comment>
<comment type="miscellaneous">
    <text>Group II phospholipase A2 is found in many cells and also extracellularly. The membrane-bound and secreted forms are identical and are encoded by a single gene.</text>
</comment>
<comment type="similarity">
    <text evidence="10">Belongs to the phospholipase A2 family.</text>
</comment>
<sequence>MKVLLLLAVVIMAFGSIQVQGSLLEFGQMILFKTGKRADVSYGFYGCHCGVGGRGSPKDATDWCCVTHDCCYNRLEKRGCGTKFLTYKFSYRGGQISCSTNQDSCRKQLCQCDKAAAECFARNKKSYSLKYQFYPNKFCKGKTPSC</sequence>
<dbReference type="EC" id="3.1.1.4" evidence="8"/>
<dbReference type="EMBL" id="D00523">
    <property type="protein sequence ID" value="BAA00410.1"/>
    <property type="molecule type" value="mRNA"/>
</dbReference>
<dbReference type="EMBL" id="M37127">
    <property type="protein sequence ID" value="AAA41223.1"/>
    <property type="molecule type" value="Genomic_DNA"/>
</dbReference>
<dbReference type="EMBL" id="M25148">
    <property type="protein sequence ID" value="AAA41920.1"/>
    <property type="molecule type" value="mRNA"/>
</dbReference>
<dbReference type="EMBL" id="X51529">
    <property type="protein sequence ID" value="CAA35909.1"/>
    <property type="molecule type" value="Genomic_DNA"/>
</dbReference>
<dbReference type="PIR" id="A33394">
    <property type="entry name" value="A33394"/>
</dbReference>
<dbReference type="PIR" id="A35493">
    <property type="entry name" value="A35493"/>
</dbReference>
<dbReference type="PIR" id="JU0283">
    <property type="entry name" value="JU0283"/>
</dbReference>
<dbReference type="PIR" id="JX0052">
    <property type="entry name" value="JX0052"/>
</dbReference>
<dbReference type="RefSeq" id="NP_113786.3">
    <property type="nucleotide sequence ID" value="NM_031598.3"/>
</dbReference>
<dbReference type="RefSeq" id="XP_006239208.1">
    <property type="nucleotide sequence ID" value="XM_006239146.3"/>
</dbReference>
<dbReference type="RefSeq" id="XP_038965307.1">
    <property type="nucleotide sequence ID" value="XM_039109379.2"/>
</dbReference>
<dbReference type="RefSeq" id="XP_063143333.1">
    <property type="nucleotide sequence ID" value="XM_063287263.1"/>
</dbReference>
<dbReference type="SMR" id="P14423"/>
<dbReference type="CORUM" id="P14423"/>
<dbReference type="FunCoup" id="P14423">
    <property type="interactions" value="232"/>
</dbReference>
<dbReference type="STRING" id="10116.ENSRNOP00000022827"/>
<dbReference type="BindingDB" id="P14423"/>
<dbReference type="ChEMBL" id="CHEMBL3686"/>
<dbReference type="PhosphoSitePlus" id="P14423"/>
<dbReference type="PaxDb" id="10116-ENSRNOP00000022827"/>
<dbReference type="Ensembl" id="ENSRNOT00000022827.5">
    <property type="protein sequence ID" value="ENSRNOP00000022827.3"/>
    <property type="gene ID" value="ENSRNOG00000016945.6"/>
</dbReference>
<dbReference type="GeneID" id="29692"/>
<dbReference type="KEGG" id="rno:29692"/>
<dbReference type="UCSC" id="RGD:620857">
    <property type="organism name" value="rat"/>
</dbReference>
<dbReference type="AGR" id="RGD:620857"/>
<dbReference type="CTD" id="5320"/>
<dbReference type="RGD" id="620857">
    <property type="gene designation" value="Pla2g2a"/>
</dbReference>
<dbReference type="eggNOG" id="KOG4087">
    <property type="taxonomic scope" value="Eukaryota"/>
</dbReference>
<dbReference type="GeneTree" id="ENSGT00940000155096"/>
<dbReference type="HOGENOM" id="CLU_090683_3_0_1"/>
<dbReference type="InParanoid" id="P14423"/>
<dbReference type="OMA" id="GDQDYCK"/>
<dbReference type="OrthoDB" id="5841574at2759"/>
<dbReference type="PhylomeDB" id="P14423"/>
<dbReference type="TreeFam" id="TF319283"/>
<dbReference type="Reactome" id="R-RNO-1482788">
    <property type="pathway name" value="Acyl chain remodelling of PC"/>
</dbReference>
<dbReference type="Reactome" id="R-RNO-1482801">
    <property type="pathway name" value="Acyl chain remodelling of PS"/>
</dbReference>
<dbReference type="Reactome" id="R-RNO-1482839">
    <property type="pathway name" value="Acyl chain remodelling of PE"/>
</dbReference>
<dbReference type="Reactome" id="R-RNO-1482922">
    <property type="pathway name" value="Acyl chain remodelling of PI"/>
</dbReference>
<dbReference type="Reactome" id="R-RNO-1482925">
    <property type="pathway name" value="Acyl chain remodelling of PG"/>
</dbReference>
<dbReference type="Reactome" id="R-RNO-1483166">
    <property type="pathway name" value="Synthesis of PA"/>
</dbReference>
<dbReference type="Reactome" id="R-RNO-6803157">
    <property type="pathway name" value="Antimicrobial peptides"/>
</dbReference>
<dbReference type="PRO" id="PR:P14423"/>
<dbReference type="Proteomes" id="UP000002494">
    <property type="component" value="Chromosome 5"/>
</dbReference>
<dbReference type="Bgee" id="ENSRNOG00000016945">
    <property type="expression patterns" value="Expressed in jejunum and 18 other cell types or tissues"/>
</dbReference>
<dbReference type="GO" id="GO:0005783">
    <property type="term" value="C:endoplasmic reticulum"/>
    <property type="evidence" value="ECO:0007669"/>
    <property type="project" value="Ensembl"/>
</dbReference>
<dbReference type="GO" id="GO:0005615">
    <property type="term" value="C:extracellular space"/>
    <property type="evidence" value="ECO:0000266"/>
    <property type="project" value="RGD"/>
</dbReference>
<dbReference type="GO" id="GO:0005741">
    <property type="term" value="C:mitochondrial outer membrane"/>
    <property type="evidence" value="ECO:0007669"/>
    <property type="project" value="UniProtKB-SubCell"/>
</dbReference>
<dbReference type="GO" id="GO:0048471">
    <property type="term" value="C:perinuclear region of cytoplasm"/>
    <property type="evidence" value="ECO:0000314"/>
    <property type="project" value="RGD"/>
</dbReference>
<dbReference type="GO" id="GO:0005886">
    <property type="term" value="C:plasma membrane"/>
    <property type="evidence" value="ECO:0007669"/>
    <property type="project" value="UniProtKB-SubCell"/>
</dbReference>
<dbReference type="GO" id="GO:0030141">
    <property type="term" value="C:secretory granule"/>
    <property type="evidence" value="ECO:0000314"/>
    <property type="project" value="RGD"/>
</dbReference>
<dbReference type="GO" id="GO:0005509">
    <property type="term" value="F:calcium ion binding"/>
    <property type="evidence" value="ECO:0000318"/>
    <property type="project" value="GO_Central"/>
</dbReference>
<dbReference type="GO" id="GO:0047498">
    <property type="term" value="F:calcium-dependent phospholipase A2 activity"/>
    <property type="evidence" value="ECO:0000314"/>
    <property type="project" value="RGD"/>
</dbReference>
<dbReference type="GO" id="GO:0004623">
    <property type="term" value="F:phospholipase A2 activity"/>
    <property type="evidence" value="ECO:0000266"/>
    <property type="project" value="RGD"/>
</dbReference>
<dbReference type="GO" id="GO:0005543">
    <property type="term" value="F:phospholipid binding"/>
    <property type="evidence" value="ECO:0000266"/>
    <property type="project" value="RGD"/>
</dbReference>
<dbReference type="GO" id="GO:0038166">
    <property type="term" value="P:angiotensin-activated signaling pathway"/>
    <property type="evidence" value="ECO:0007669"/>
    <property type="project" value="Ensembl"/>
</dbReference>
<dbReference type="GO" id="GO:0050482">
    <property type="term" value="P:arachidonate secretion"/>
    <property type="evidence" value="ECO:0007669"/>
    <property type="project" value="InterPro"/>
</dbReference>
<dbReference type="GO" id="GO:0008283">
    <property type="term" value="P:cell population proliferation"/>
    <property type="evidence" value="ECO:0000266"/>
    <property type="project" value="RGD"/>
</dbReference>
<dbReference type="GO" id="GO:0050830">
    <property type="term" value="P:defense response to Gram-positive bacterium"/>
    <property type="evidence" value="ECO:0000250"/>
    <property type="project" value="UniProtKB"/>
</dbReference>
<dbReference type="GO" id="GO:0006954">
    <property type="term" value="P:inflammatory response"/>
    <property type="evidence" value="ECO:0007669"/>
    <property type="project" value="UniProtKB-KW"/>
</dbReference>
<dbReference type="GO" id="GO:0036335">
    <property type="term" value="P:intestinal stem cell homeostasis"/>
    <property type="evidence" value="ECO:0000250"/>
    <property type="project" value="UniProtKB"/>
</dbReference>
<dbReference type="GO" id="GO:0031640">
    <property type="term" value="P:killing of cells of another organism"/>
    <property type="evidence" value="ECO:0007669"/>
    <property type="project" value="UniProtKB-KW"/>
</dbReference>
<dbReference type="GO" id="GO:0016042">
    <property type="term" value="P:lipid catabolic process"/>
    <property type="evidence" value="ECO:0000304"/>
    <property type="project" value="RGD"/>
</dbReference>
<dbReference type="GO" id="GO:0034374">
    <property type="term" value="P:low-density lipoprotein particle remodeling"/>
    <property type="evidence" value="ECO:0007669"/>
    <property type="project" value="Ensembl"/>
</dbReference>
<dbReference type="GO" id="GO:0008285">
    <property type="term" value="P:negative regulation of cell population proliferation"/>
    <property type="evidence" value="ECO:0000266"/>
    <property type="project" value="RGD"/>
</dbReference>
<dbReference type="GO" id="GO:0050680">
    <property type="term" value="P:negative regulation of epithelial cell proliferation"/>
    <property type="evidence" value="ECO:0000266"/>
    <property type="project" value="RGD"/>
</dbReference>
<dbReference type="GO" id="GO:0042130">
    <property type="term" value="P:negative regulation of T cell proliferation"/>
    <property type="evidence" value="ECO:0000318"/>
    <property type="project" value="GO_Central"/>
</dbReference>
<dbReference type="GO" id="GO:0046473">
    <property type="term" value="P:phosphatidic acid metabolic process"/>
    <property type="evidence" value="ECO:0000266"/>
    <property type="project" value="RGD"/>
</dbReference>
<dbReference type="GO" id="GO:0046470">
    <property type="term" value="P:phosphatidylcholine metabolic process"/>
    <property type="evidence" value="ECO:0000250"/>
    <property type="project" value="UniProtKB"/>
</dbReference>
<dbReference type="GO" id="GO:0046337">
    <property type="term" value="P:phosphatidylethanolamine metabolic process"/>
    <property type="evidence" value="ECO:0000250"/>
    <property type="project" value="UniProtKB"/>
</dbReference>
<dbReference type="GO" id="GO:0046471">
    <property type="term" value="P:phosphatidylglycerol metabolic process"/>
    <property type="evidence" value="ECO:0000318"/>
    <property type="project" value="GO_Central"/>
</dbReference>
<dbReference type="GO" id="GO:0006644">
    <property type="term" value="P:phospholipid metabolic process"/>
    <property type="evidence" value="ECO:0000314"/>
    <property type="project" value="RGD"/>
</dbReference>
<dbReference type="GO" id="GO:0070374">
    <property type="term" value="P:positive regulation of ERK1 and ERK2 cascade"/>
    <property type="evidence" value="ECO:0000266"/>
    <property type="project" value="RGD"/>
</dbReference>
<dbReference type="GO" id="GO:0001516">
    <property type="term" value="P:prostaglandin biosynthetic process"/>
    <property type="evidence" value="ECO:0000266"/>
    <property type="project" value="RGD"/>
</dbReference>
<dbReference type="GO" id="GO:0042127">
    <property type="term" value="P:regulation of cell population proliferation"/>
    <property type="evidence" value="ECO:0000266"/>
    <property type="project" value="RGD"/>
</dbReference>
<dbReference type="GO" id="GO:0001936">
    <property type="term" value="P:regulation of endothelial cell proliferation"/>
    <property type="evidence" value="ECO:0000266"/>
    <property type="project" value="RGD"/>
</dbReference>
<dbReference type="GO" id="GO:0050678">
    <property type="term" value="P:regulation of epithelial cell proliferation"/>
    <property type="evidence" value="ECO:0000266"/>
    <property type="project" value="RGD"/>
</dbReference>
<dbReference type="GO" id="GO:1902563">
    <property type="term" value="P:regulation of neutrophil activation"/>
    <property type="evidence" value="ECO:0000250"/>
    <property type="project" value="UniProtKB"/>
</dbReference>
<dbReference type="GO" id="GO:0035019">
    <property type="term" value="P:somatic stem cell population maintenance"/>
    <property type="evidence" value="ECO:0000266"/>
    <property type="project" value="RGD"/>
</dbReference>
<dbReference type="CDD" id="cd00125">
    <property type="entry name" value="PLA2c"/>
    <property type="match status" value="1"/>
</dbReference>
<dbReference type="FunFam" id="1.20.90.10:FF:000001">
    <property type="entry name" value="Basic phospholipase A2 homolog"/>
    <property type="match status" value="1"/>
</dbReference>
<dbReference type="Gene3D" id="1.20.90.10">
    <property type="entry name" value="Phospholipase A2 domain"/>
    <property type="match status" value="1"/>
</dbReference>
<dbReference type="InterPro" id="IPR001211">
    <property type="entry name" value="PLipase_A2"/>
</dbReference>
<dbReference type="InterPro" id="IPR033112">
    <property type="entry name" value="PLipase_A2_Asp_AS"/>
</dbReference>
<dbReference type="InterPro" id="IPR016090">
    <property type="entry name" value="PLipase_A2_dom"/>
</dbReference>
<dbReference type="InterPro" id="IPR036444">
    <property type="entry name" value="PLipase_A2_dom_sf"/>
</dbReference>
<dbReference type="InterPro" id="IPR033113">
    <property type="entry name" value="PLipase_A2_His_AS"/>
</dbReference>
<dbReference type="PANTHER" id="PTHR11716">
    <property type="entry name" value="PHOSPHOLIPASE A2 FAMILY MEMBER"/>
    <property type="match status" value="1"/>
</dbReference>
<dbReference type="PANTHER" id="PTHR11716:SF9">
    <property type="entry name" value="PHOSPHOLIPASE A2, MEMBRANE ASSOCIATED"/>
    <property type="match status" value="1"/>
</dbReference>
<dbReference type="Pfam" id="PF00068">
    <property type="entry name" value="Phospholip_A2_1"/>
    <property type="match status" value="1"/>
</dbReference>
<dbReference type="PRINTS" id="PR00389">
    <property type="entry name" value="PHPHLIPASEA2"/>
</dbReference>
<dbReference type="SMART" id="SM00085">
    <property type="entry name" value="PA2c"/>
    <property type="match status" value="1"/>
</dbReference>
<dbReference type="SUPFAM" id="SSF48619">
    <property type="entry name" value="Phospholipase A2, PLA2"/>
    <property type="match status" value="1"/>
</dbReference>
<dbReference type="PROSITE" id="PS00119">
    <property type="entry name" value="PA2_ASP"/>
    <property type="match status" value="1"/>
</dbReference>
<dbReference type="PROSITE" id="PS00118">
    <property type="entry name" value="PA2_HIS"/>
    <property type="match status" value="1"/>
</dbReference>
<organism>
    <name type="scientific">Rattus norvegicus</name>
    <name type="common">Rat</name>
    <dbReference type="NCBI Taxonomy" id="10116"/>
    <lineage>
        <taxon>Eukaryota</taxon>
        <taxon>Metazoa</taxon>
        <taxon>Chordata</taxon>
        <taxon>Craniata</taxon>
        <taxon>Vertebrata</taxon>
        <taxon>Euteleostomi</taxon>
        <taxon>Mammalia</taxon>
        <taxon>Eutheria</taxon>
        <taxon>Euarchontoglires</taxon>
        <taxon>Glires</taxon>
        <taxon>Rodentia</taxon>
        <taxon>Myomorpha</taxon>
        <taxon>Muroidea</taxon>
        <taxon>Muridae</taxon>
        <taxon>Murinae</taxon>
        <taxon>Rattus</taxon>
    </lineage>
</organism>
<proteinExistence type="evidence at protein level"/>
<reference key="1">
    <citation type="journal article" date="1989" name="J. Biochem.">
        <title>Structure of cDNA coding for rat platelet phospholipase A2.</title>
        <authorList>
            <person name="Komada M."/>
            <person name="Kudo I."/>
            <person name="Mizushima H."/>
            <person name="Kitamura N."/>
            <person name="Inoue K."/>
        </authorList>
    </citation>
    <scope>NUCLEOTIDE SEQUENCE [MRNA]</scope>
    <source>
        <strain>Sprague-Dawley</strain>
        <tissue>Platelet</tissue>
    </source>
</reference>
<reference key="2">
    <citation type="journal article" date="1990" name="Biochem. Biophys. Res. Commun.">
        <title>Structure of gene coding for rat group II phospholipase A2.</title>
        <authorList>
            <person name="Komada M."/>
            <person name="Kudo I."/>
            <person name="Inoue K."/>
        </authorList>
    </citation>
    <scope>NUCLEOTIDE SEQUENCE [GENOMIC DNA]</scope>
    <source>
        <tissue>Spleen</tissue>
    </source>
</reference>
<reference key="3">
    <citation type="journal article" date="1989" name="Biochem. Biophys. Res. Commun.">
        <title>cDNA cloning and sequence determination of rat membrane-associated phospholipase A2.</title>
        <authorList>
            <person name="Ishizaki J."/>
            <person name="Ohara O."/>
            <person name="Nakamura E."/>
            <person name="Tamaki M."/>
            <person name="Ono T."/>
            <person name="Kanda A."/>
            <person name="Yoshida N."/>
            <person name="Teraoka H."/>
            <person name="Tojo H."/>
            <person name="Okamoto M."/>
        </authorList>
    </citation>
    <scope>NUCLEOTIDE SEQUENCE [MRNA]</scope>
</reference>
<reference key="4">
    <citation type="journal article" date="1990" name="Biochim. Biophys. Acta">
        <title>Structure of genomic DNA for rat platelet phospholipase A2.</title>
        <authorList>
            <person name="Kusunoki C."/>
            <person name="Satoh S."/>
            <person name="Kobayashi M."/>
            <person name="Niwa M."/>
        </authorList>
    </citation>
    <scope>NUCLEOTIDE SEQUENCE [GENOMIC DNA]</scope>
    <source>
        <strain>Sprague-Dawley</strain>
        <tissue>Liver</tissue>
    </source>
</reference>
<reference key="5">
    <citation type="journal article" date="1988" name="J. Biochem.">
        <title>The primary structure of rat platelet phospholipase A2.</title>
        <authorList>
            <person name="Hayakawa M."/>
            <person name="Kudo I."/>
            <person name="Tomita M."/>
            <person name="Nojima S."/>
            <person name="Inoue K."/>
        </authorList>
    </citation>
    <scope>PROTEIN SEQUENCE OF 22-146</scope>
    <source>
        <strain>Wistar</strain>
        <tissue>Platelet</tissue>
    </source>
</reference>
<reference key="6">
    <citation type="journal article" date="1988" name="J. Biol. Chem.">
        <title>Purification and characterization of a membrane-associated phospholipase A2 from rat spleen. Its comparison with a cytosolic phospholipase A2 S-1.</title>
        <authorList>
            <person name="Ono T."/>
            <person name="Tojo H."/>
            <person name="Kuramitsu S."/>
            <person name="Kagamiyama H."/>
            <person name="Okamoto M."/>
        </authorList>
    </citation>
    <scope>PROTEIN SEQUENCE OF 22-57</scope>
    <scope>FUNCTION</scope>
    <scope>CATALYTIC ACTIVITY</scope>
    <scope>COFACTOR</scope>
    <scope>BIOPHYSICOCHEMICAL PROPERTIES</scope>
    <source>
        <tissue>Spleen</tissue>
    </source>
</reference>
<reference key="7">
    <citation type="journal article" date="1987" name="J. Biochem.">
        <title>Amino acid composition and NH2-terminal amino acid sequence of rat platelet secretory phospholipase A2.</title>
        <authorList>
            <person name="Hayakawa M."/>
            <person name="Horigome K."/>
            <person name="Kudo I."/>
            <person name="Tomita M."/>
            <person name="Nojima S."/>
            <person name="Inoue K."/>
        </authorList>
    </citation>
    <scope>PROTEIN SEQUENCE OF 22-46</scope>
    <source>
        <tissue>Platelet</tissue>
    </source>
</reference>
<reference key="8">
    <citation type="journal article" date="1989" name="J. Biol. Chem.">
        <title>Immunoaffinity purification, partial sequence, and subcellular localization of rat liver phospholipase A2.</title>
        <authorList>
            <person name="Aarsman A.J."/>
            <person name="de Jong J.G.N."/>
            <person name="Arnoldussen E."/>
            <person name="Neys F.W."/>
            <person name="van Wassenaar P.D."/>
            <person name="van den Bosch H."/>
        </authorList>
    </citation>
    <scope>PROTEIN SEQUENCE OF 22-45</scope>
    <scope>SUBCELLULAR LOCATION</scope>
    <source>
        <tissue>Liver</tissue>
    </source>
</reference>
<feature type="signal peptide" evidence="6 7 8 9">
    <location>
        <begin position="1"/>
        <end position="21"/>
    </location>
</feature>
<feature type="chain" id="PRO_0000022752" description="Phospholipase A2, membrane associated">
    <location>
        <begin position="22"/>
        <end position="146"/>
    </location>
</feature>
<feature type="active site" evidence="1">
    <location>
        <position position="68"/>
    </location>
</feature>
<feature type="active site" evidence="1">
    <location>
        <position position="113"/>
    </location>
</feature>
<feature type="binding site" evidence="2">
    <location>
        <position position="48"/>
    </location>
    <ligand>
        <name>Ca(2+)</name>
        <dbReference type="ChEBI" id="CHEBI:29108"/>
    </ligand>
</feature>
<feature type="binding site" evidence="2">
    <location>
        <position position="50"/>
    </location>
    <ligand>
        <name>Ca(2+)</name>
        <dbReference type="ChEBI" id="CHEBI:29108"/>
    </ligand>
</feature>
<feature type="binding site" evidence="2">
    <location>
        <position position="52"/>
    </location>
    <ligand>
        <name>Ca(2+)</name>
        <dbReference type="ChEBI" id="CHEBI:29108"/>
    </ligand>
</feature>
<feature type="binding site" evidence="2">
    <location>
        <position position="69"/>
    </location>
    <ligand>
        <name>Ca(2+)</name>
        <dbReference type="ChEBI" id="CHEBI:29108"/>
    </ligand>
</feature>
<feature type="site" description="Important for integrin binding" evidence="2">
    <location>
        <position position="122"/>
    </location>
</feature>
<feature type="disulfide bond" evidence="2">
    <location>
        <begin position="47"/>
        <end position="139"/>
    </location>
</feature>
<feature type="disulfide bond" evidence="2">
    <location>
        <begin position="49"/>
        <end position="65"/>
    </location>
</feature>
<feature type="disulfide bond" evidence="2">
    <location>
        <begin position="64"/>
        <end position="119"/>
    </location>
</feature>
<feature type="disulfide bond" evidence="2">
    <location>
        <begin position="70"/>
        <end position="146"/>
    </location>
</feature>
<feature type="disulfide bond" evidence="2">
    <location>
        <begin position="71"/>
        <end position="112"/>
    </location>
</feature>
<feature type="disulfide bond" evidence="2">
    <location>
        <begin position="80"/>
        <end position="105"/>
    </location>
</feature>
<feature type="disulfide bond" evidence="2">
    <location>
        <begin position="98"/>
        <end position="110"/>
    </location>
</feature>
<feature type="sequence variant">
    <original>P</original>
    <variation>L</variation>
    <location>
        <position position="135"/>
    </location>
</feature>
<feature type="sequence conflict" description="In Ref. 8; AA sequence." evidence="10" ref="8">
    <original>S</original>
    <variation>D</variation>
    <location>
        <position position="22"/>
    </location>
</feature>
<feature type="sequence conflict" description="In Ref. 5; AA sequence." evidence="10" ref="5">
    <original>W</original>
    <variation>E</variation>
    <location>
        <position position="63"/>
    </location>
</feature>
<feature type="sequence conflict" description="In Ref. 5; AA sequence." evidence="10" ref="5">
    <original>D</original>
    <variation>E</variation>
    <location>
        <position position="69"/>
    </location>
</feature>
<feature type="sequence conflict" description="In Ref. 5; AA sequence." evidence="10" ref="5">
    <original>R</original>
    <variation>S</variation>
    <location>
        <position position="78"/>
    </location>
</feature>
<feature type="sequence conflict" description="In Ref. 3; AAA41920." evidence="10" ref="3">
    <original>L</original>
    <variation>V</variation>
    <location>
        <position position="85"/>
    </location>
</feature>
<feature type="sequence conflict" description="In Ref. 5; AA sequence." evidence="10" ref="5">
    <original>A</original>
    <variation>S</variation>
    <location>
        <position position="121"/>
    </location>
</feature>
<accession>P14423</accession>
<gene>
    <name type="primary">Pla2g2a</name>
</gene>